<feature type="chain" id="PRO_1000142220" description="Large ribosomal subunit protein uL22">
    <location>
        <begin position="1"/>
        <end position="110"/>
    </location>
</feature>
<comment type="function">
    <text evidence="1">This protein binds specifically to 23S rRNA; its binding is stimulated by other ribosomal proteins, e.g. L4, L17, and L20. It is important during the early stages of 50S assembly. It makes multiple contacts with different domains of the 23S rRNA in the assembled 50S subunit and ribosome (By similarity).</text>
</comment>
<comment type="function">
    <text evidence="1">The globular domain of the protein is located near the polypeptide exit tunnel on the outside of the subunit, while an extended beta-hairpin is found that lines the wall of the exit tunnel in the center of the 70S ribosome.</text>
</comment>
<comment type="subunit">
    <text evidence="1">Part of the 50S ribosomal subunit.</text>
</comment>
<comment type="similarity">
    <text evidence="1">Belongs to the universal ribosomal protein uL22 family.</text>
</comment>
<name>RL22_ACTPJ</name>
<evidence type="ECO:0000255" key="1">
    <source>
        <dbReference type="HAMAP-Rule" id="MF_01331"/>
    </source>
</evidence>
<evidence type="ECO:0000305" key="2"/>
<dbReference type="EMBL" id="CP000687">
    <property type="protein sequence ID" value="ABY70350.1"/>
    <property type="molecule type" value="Genomic_DNA"/>
</dbReference>
<dbReference type="RefSeq" id="WP_005599292.1">
    <property type="nucleotide sequence ID" value="NC_010278.1"/>
</dbReference>
<dbReference type="SMR" id="B0BST6"/>
<dbReference type="GeneID" id="92743650"/>
<dbReference type="KEGG" id="apj:APJL_1800"/>
<dbReference type="HOGENOM" id="CLU_083987_3_3_6"/>
<dbReference type="Proteomes" id="UP000008547">
    <property type="component" value="Chromosome"/>
</dbReference>
<dbReference type="GO" id="GO:0022625">
    <property type="term" value="C:cytosolic large ribosomal subunit"/>
    <property type="evidence" value="ECO:0007669"/>
    <property type="project" value="TreeGrafter"/>
</dbReference>
<dbReference type="GO" id="GO:0019843">
    <property type="term" value="F:rRNA binding"/>
    <property type="evidence" value="ECO:0007669"/>
    <property type="project" value="UniProtKB-UniRule"/>
</dbReference>
<dbReference type="GO" id="GO:0003735">
    <property type="term" value="F:structural constituent of ribosome"/>
    <property type="evidence" value="ECO:0007669"/>
    <property type="project" value="InterPro"/>
</dbReference>
<dbReference type="GO" id="GO:0006412">
    <property type="term" value="P:translation"/>
    <property type="evidence" value="ECO:0007669"/>
    <property type="project" value="UniProtKB-UniRule"/>
</dbReference>
<dbReference type="CDD" id="cd00336">
    <property type="entry name" value="Ribosomal_L22"/>
    <property type="match status" value="1"/>
</dbReference>
<dbReference type="FunFam" id="3.90.470.10:FF:000001">
    <property type="entry name" value="50S ribosomal protein L22"/>
    <property type="match status" value="1"/>
</dbReference>
<dbReference type="Gene3D" id="3.90.470.10">
    <property type="entry name" value="Ribosomal protein L22/L17"/>
    <property type="match status" value="1"/>
</dbReference>
<dbReference type="HAMAP" id="MF_01331_B">
    <property type="entry name" value="Ribosomal_uL22_B"/>
    <property type="match status" value="1"/>
</dbReference>
<dbReference type="InterPro" id="IPR001063">
    <property type="entry name" value="Ribosomal_uL22"/>
</dbReference>
<dbReference type="InterPro" id="IPR005727">
    <property type="entry name" value="Ribosomal_uL22_bac/chlpt-type"/>
</dbReference>
<dbReference type="InterPro" id="IPR047867">
    <property type="entry name" value="Ribosomal_uL22_bac/org-type"/>
</dbReference>
<dbReference type="InterPro" id="IPR018260">
    <property type="entry name" value="Ribosomal_uL22_CS"/>
</dbReference>
<dbReference type="InterPro" id="IPR036394">
    <property type="entry name" value="Ribosomal_uL22_sf"/>
</dbReference>
<dbReference type="NCBIfam" id="TIGR01044">
    <property type="entry name" value="rplV_bact"/>
    <property type="match status" value="1"/>
</dbReference>
<dbReference type="PANTHER" id="PTHR13501">
    <property type="entry name" value="CHLOROPLAST 50S RIBOSOMAL PROTEIN L22-RELATED"/>
    <property type="match status" value="1"/>
</dbReference>
<dbReference type="PANTHER" id="PTHR13501:SF8">
    <property type="entry name" value="LARGE RIBOSOMAL SUBUNIT PROTEIN UL22M"/>
    <property type="match status" value="1"/>
</dbReference>
<dbReference type="Pfam" id="PF00237">
    <property type="entry name" value="Ribosomal_L22"/>
    <property type="match status" value="1"/>
</dbReference>
<dbReference type="SUPFAM" id="SSF54843">
    <property type="entry name" value="Ribosomal protein L22"/>
    <property type="match status" value="1"/>
</dbReference>
<dbReference type="PROSITE" id="PS00464">
    <property type="entry name" value="RIBOSOMAL_L22"/>
    <property type="match status" value="1"/>
</dbReference>
<proteinExistence type="inferred from homology"/>
<accession>B0BST6</accession>
<keyword id="KW-0687">Ribonucleoprotein</keyword>
<keyword id="KW-0689">Ribosomal protein</keyword>
<keyword id="KW-0694">RNA-binding</keyword>
<keyword id="KW-0699">rRNA-binding</keyword>
<sequence>METIAKHRYARTSAQKARLVADLIRGKKVAQALEILTFTNKKAAALVKKVLESAIANAEHNDGADVDDLKVAKIFVDEGPSMKRVMPRAKGRADRILKRTSHITVVVSDR</sequence>
<organism>
    <name type="scientific">Actinobacillus pleuropneumoniae serotype 3 (strain JL03)</name>
    <dbReference type="NCBI Taxonomy" id="434271"/>
    <lineage>
        <taxon>Bacteria</taxon>
        <taxon>Pseudomonadati</taxon>
        <taxon>Pseudomonadota</taxon>
        <taxon>Gammaproteobacteria</taxon>
        <taxon>Pasteurellales</taxon>
        <taxon>Pasteurellaceae</taxon>
        <taxon>Actinobacillus</taxon>
    </lineage>
</organism>
<protein>
    <recommendedName>
        <fullName evidence="1">Large ribosomal subunit protein uL22</fullName>
    </recommendedName>
    <alternativeName>
        <fullName evidence="2">50S ribosomal protein L22</fullName>
    </alternativeName>
</protein>
<gene>
    <name evidence="1" type="primary">rplV</name>
    <name type="ordered locus">APJL_1800</name>
</gene>
<reference key="1">
    <citation type="journal article" date="2008" name="PLoS ONE">
        <title>Genome biology of Actinobacillus pleuropneumoniae JL03, an isolate of serotype 3 prevalent in China.</title>
        <authorList>
            <person name="Xu Z."/>
            <person name="Zhou Y."/>
            <person name="Li L."/>
            <person name="Zhou R."/>
            <person name="Xiao S."/>
            <person name="Wan Y."/>
            <person name="Zhang S."/>
            <person name="Wang K."/>
            <person name="Li W."/>
            <person name="Li L."/>
            <person name="Jin H."/>
            <person name="Kang M."/>
            <person name="Dalai B."/>
            <person name="Li T."/>
            <person name="Liu L."/>
            <person name="Cheng Y."/>
            <person name="Zhang L."/>
            <person name="Xu T."/>
            <person name="Zheng H."/>
            <person name="Pu S."/>
            <person name="Wang B."/>
            <person name="Gu W."/>
            <person name="Zhang X.L."/>
            <person name="Zhu G.-F."/>
            <person name="Wang S."/>
            <person name="Zhao G.-P."/>
            <person name="Chen H."/>
        </authorList>
    </citation>
    <scope>NUCLEOTIDE SEQUENCE [LARGE SCALE GENOMIC DNA]</scope>
    <source>
        <strain>JL03</strain>
    </source>
</reference>